<feature type="chain" id="PRO_0000103916" description="Lysine exporter LysE">
    <location>
        <begin position="1"/>
        <end position="199"/>
    </location>
</feature>
<feature type="transmembrane region" description="Helical" evidence="2">
    <location>
        <begin position="6"/>
        <end position="26"/>
    </location>
</feature>
<feature type="transmembrane region" description="Helical" evidence="2">
    <location>
        <begin position="42"/>
        <end position="62"/>
    </location>
</feature>
<feature type="transmembrane region" description="Helical" evidence="2">
    <location>
        <begin position="68"/>
        <end position="88"/>
    </location>
</feature>
<feature type="transmembrane region" description="Helical" evidence="2">
    <location>
        <begin position="144"/>
        <end position="164"/>
    </location>
</feature>
<feature type="transmembrane region" description="Helical" evidence="2">
    <location>
        <begin position="178"/>
        <end position="198"/>
    </location>
</feature>
<keyword id="KW-0029">Amino-acid transport</keyword>
<keyword id="KW-0997">Cell inner membrane</keyword>
<keyword id="KW-1003">Cell membrane</keyword>
<keyword id="KW-0472">Membrane</keyword>
<keyword id="KW-1185">Reference proteome</keyword>
<keyword id="KW-0812">Transmembrane</keyword>
<keyword id="KW-1133">Transmembrane helix</keyword>
<keyword id="KW-0813">Transport</keyword>
<name>LYSE_MYCTU</name>
<dbReference type="EMBL" id="AL123456">
    <property type="protein sequence ID" value="CCP44756.1"/>
    <property type="molecule type" value="Genomic_DNA"/>
</dbReference>
<dbReference type="PIR" id="H70756">
    <property type="entry name" value="H70756"/>
</dbReference>
<dbReference type="RefSeq" id="NP_216502.1">
    <property type="nucleotide sequence ID" value="NC_000962.3"/>
</dbReference>
<dbReference type="RefSeq" id="WP_003409989.1">
    <property type="nucleotide sequence ID" value="NZ_NVQJ01000043.1"/>
</dbReference>
<dbReference type="STRING" id="83332.Rv1986"/>
<dbReference type="PaxDb" id="83332-Rv1986"/>
<dbReference type="DNASU" id="885635"/>
<dbReference type="GeneID" id="45425965"/>
<dbReference type="GeneID" id="885635"/>
<dbReference type="KEGG" id="mtu:Rv1986"/>
<dbReference type="KEGG" id="mtv:RVBD_1986"/>
<dbReference type="TubercuList" id="Rv1986"/>
<dbReference type="eggNOG" id="COG1279">
    <property type="taxonomic scope" value="Bacteria"/>
</dbReference>
<dbReference type="InParanoid" id="P9WK31"/>
<dbReference type="OrthoDB" id="5638726at2"/>
<dbReference type="PhylomeDB" id="P9WK31"/>
<dbReference type="Proteomes" id="UP000001584">
    <property type="component" value="Chromosome"/>
</dbReference>
<dbReference type="GO" id="GO:0005886">
    <property type="term" value="C:plasma membrane"/>
    <property type="evidence" value="ECO:0000318"/>
    <property type="project" value="GO_Central"/>
</dbReference>
<dbReference type="GO" id="GO:0015171">
    <property type="term" value="F:amino acid transmembrane transporter activity"/>
    <property type="evidence" value="ECO:0000318"/>
    <property type="project" value="GO_Central"/>
</dbReference>
<dbReference type="GO" id="GO:0006865">
    <property type="term" value="P:amino acid transport"/>
    <property type="evidence" value="ECO:0000318"/>
    <property type="project" value="GO_Central"/>
</dbReference>
<dbReference type="InterPro" id="IPR001123">
    <property type="entry name" value="LeuE-type"/>
</dbReference>
<dbReference type="InterPro" id="IPR004777">
    <property type="entry name" value="Lys/arg_exporter"/>
</dbReference>
<dbReference type="NCBIfam" id="TIGR00948">
    <property type="entry name" value="2a75"/>
    <property type="match status" value="1"/>
</dbReference>
<dbReference type="PANTHER" id="PTHR30086">
    <property type="entry name" value="ARGININE EXPORTER PROTEIN ARGO"/>
    <property type="match status" value="1"/>
</dbReference>
<dbReference type="PANTHER" id="PTHR30086:SF20">
    <property type="entry name" value="ARGININE EXPORTER PROTEIN ARGO-RELATED"/>
    <property type="match status" value="1"/>
</dbReference>
<dbReference type="Pfam" id="PF01810">
    <property type="entry name" value="LysE"/>
    <property type="match status" value="1"/>
</dbReference>
<evidence type="ECO:0000250" key="1">
    <source>
        <dbReference type="UniProtKB" id="P94633"/>
    </source>
</evidence>
<evidence type="ECO:0000255" key="2"/>
<evidence type="ECO:0000269" key="3">
    <source>
    </source>
</evidence>
<evidence type="ECO:0000303" key="4">
    <source>
    </source>
</evidence>
<evidence type="ECO:0000305" key="5"/>
<gene>
    <name evidence="4" type="primary">lysE</name>
    <name type="ordered locus">Rv1986</name>
    <name type="ORF">MTCY39.33c</name>
</gene>
<proteinExistence type="evidence at transcript level"/>
<protein>
    <recommendedName>
        <fullName evidence="1">Lysine exporter LysE</fullName>
    </recommendedName>
</protein>
<organism>
    <name type="scientific">Mycobacterium tuberculosis (strain ATCC 25618 / H37Rv)</name>
    <dbReference type="NCBI Taxonomy" id="83332"/>
    <lineage>
        <taxon>Bacteria</taxon>
        <taxon>Bacillati</taxon>
        <taxon>Actinomycetota</taxon>
        <taxon>Actinomycetes</taxon>
        <taxon>Mycobacteriales</taxon>
        <taxon>Mycobacteriaceae</taxon>
        <taxon>Mycobacterium</taxon>
        <taxon>Mycobacterium tuberculosis complex</taxon>
    </lineage>
</organism>
<sequence>MNSPLVVGFLACFTLIAAIGAQNAFVLRQGIQREHVLPVVALCTVSDIVLIAAGIAGFGALIGAHPRALNVVKFGGAAFLIGYGLLAARRAWRPVALIPSGATPVRLAEVLVTCAAFTFLNPHVYLDTVVLLGALANEHSDQRWLFGLGAVTASAVWFATLGFGAGRLRGLFTNPGSWRILDGLIAVMMVALGISLTVT</sequence>
<accession>P9WK31</accession>
<accession>L0T9U8</accession>
<accession>P64903</accession>
<accession>Q10871</accession>
<reference key="1">
    <citation type="journal article" date="1998" name="Nature">
        <title>Deciphering the biology of Mycobacterium tuberculosis from the complete genome sequence.</title>
        <authorList>
            <person name="Cole S.T."/>
            <person name="Brosch R."/>
            <person name="Parkhill J."/>
            <person name="Garnier T."/>
            <person name="Churcher C.M."/>
            <person name="Harris D.E."/>
            <person name="Gordon S.V."/>
            <person name="Eiglmeier K."/>
            <person name="Gas S."/>
            <person name="Barry C.E. III"/>
            <person name="Tekaia F."/>
            <person name="Badcock K."/>
            <person name="Basham D."/>
            <person name="Brown D."/>
            <person name="Chillingworth T."/>
            <person name="Connor R."/>
            <person name="Davies R.M."/>
            <person name="Devlin K."/>
            <person name="Feltwell T."/>
            <person name="Gentles S."/>
            <person name="Hamlin N."/>
            <person name="Holroyd S."/>
            <person name="Hornsby T."/>
            <person name="Jagels K."/>
            <person name="Krogh A."/>
            <person name="McLean J."/>
            <person name="Moule S."/>
            <person name="Murphy L.D."/>
            <person name="Oliver S."/>
            <person name="Osborne J."/>
            <person name="Quail M.A."/>
            <person name="Rajandream M.A."/>
            <person name="Rogers J."/>
            <person name="Rutter S."/>
            <person name="Seeger K."/>
            <person name="Skelton S."/>
            <person name="Squares S."/>
            <person name="Squares R."/>
            <person name="Sulston J.E."/>
            <person name="Taylor K."/>
            <person name="Whitehead S."/>
            <person name="Barrell B.G."/>
        </authorList>
    </citation>
    <scope>NUCLEOTIDE SEQUENCE [LARGE SCALE GENOMIC DNA]</scope>
    <source>
        <strain>ATCC 25618 / H37Rv</strain>
    </source>
</reference>
<reference key="2">
    <citation type="journal article" date="2017" name="PLoS ONE">
        <title>The transcriptional regulator LysG (Rv1985c) of Mycobacterium tuberculosis activates lysE (Rv1986) in a lysine-dependent manner.</title>
        <authorList>
            <person name="Schneefeld M."/>
            <person name="Busche T."/>
            <person name="Geffers R."/>
            <person name="Kalinowski J."/>
            <person name="Bange F.C."/>
        </authorList>
    </citation>
    <scope>INDUCTION</scope>
    <source>
        <strain>ATCC 25618 / H37Rv</strain>
    </source>
</reference>
<comment type="function">
    <text evidence="1">Catalyzes the efflux of L-lysine.</text>
</comment>
<comment type="subcellular location">
    <subcellularLocation>
        <location evidence="5">Cell inner membrane</location>
        <topology evidence="2">Multi-pass membrane protein</topology>
    </subcellularLocation>
</comment>
<comment type="induction">
    <text evidence="3">Positively regulated by LysG in the presence of lysine or histidine.</text>
</comment>
<comment type="similarity">
    <text evidence="5">Belongs to the LysE/ArgO transporter (TC 2.A.75) family.</text>
</comment>